<dbReference type="EC" id="2.2.1.7" evidence="1"/>
<dbReference type="EMBL" id="AM933172">
    <property type="protein sequence ID" value="CAR31990.1"/>
    <property type="molecule type" value="Genomic_DNA"/>
</dbReference>
<dbReference type="RefSeq" id="WP_000006777.1">
    <property type="nucleotide sequence ID" value="NC_011294.1"/>
</dbReference>
<dbReference type="SMR" id="B5QTH0"/>
<dbReference type="KEGG" id="set:SEN0404"/>
<dbReference type="HOGENOM" id="CLU_009227_1_4_6"/>
<dbReference type="UniPathway" id="UPA00064">
    <property type="reaction ID" value="UER00091"/>
</dbReference>
<dbReference type="Proteomes" id="UP000000613">
    <property type="component" value="Chromosome"/>
</dbReference>
<dbReference type="GO" id="GO:0005829">
    <property type="term" value="C:cytosol"/>
    <property type="evidence" value="ECO:0007669"/>
    <property type="project" value="TreeGrafter"/>
</dbReference>
<dbReference type="GO" id="GO:0008661">
    <property type="term" value="F:1-deoxy-D-xylulose-5-phosphate synthase activity"/>
    <property type="evidence" value="ECO:0007669"/>
    <property type="project" value="UniProtKB-UniRule"/>
</dbReference>
<dbReference type="GO" id="GO:0000287">
    <property type="term" value="F:magnesium ion binding"/>
    <property type="evidence" value="ECO:0007669"/>
    <property type="project" value="UniProtKB-UniRule"/>
</dbReference>
<dbReference type="GO" id="GO:0030976">
    <property type="term" value="F:thiamine pyrophosphate binding"/>
    <property type="evidence" value="ECO:0007669"/>
    <property type="project" value="UniProtKB-UniRule"/>
</dbReference>
<dbReference type="GO" id="GO:0052865">
    <property type="term" value="P:1-deoxy-D-xylulose 5-phosphate biosynthetic process"/>
    <property type="evidence" value="ECO:0007669"/>
    <property type="project" value="UniProtKB-UniPathway"/>
</dbReference>
<dbReference type="GO" id="GO:0019288">
    <property type="term" value="P:isopentenyl diphosphate biosynthetic process, methylerythritol 4-phosphate pathway"/>
    <property type="evidence" value="ECO:0007669"/>
    <property type="project" value="TreeGrafter"/>
</dbReference>
<dbReference type="GO" id="GO:0016114">
    <property type="term" value="P:terpenoid biosynthetic process"/>
    <property type="evidence" value="ECO:0007669"/>
    <property type="project" value="UniProtKB-UniRule"/>
</dbReference>
<dbReference type="GO" id="GO:0009228">
    <property type="term" value="P:thiamine biosynthetic process"/>
    <property type="evidence" value="ECO:0007669"/>
    <property type="project" value="UniProtKB-UniRule"/>
</dbReference>
<dbReference type="CDD" id="cd02007">
    <property type="entry name" value="TPP_DXS"/>
    <property type="match status" value="1"/>
</dbReference>
<dbReference type="CDD" id="cd07033">
    <property type="entry name" value="TPP_PYR_DXS_TK_like"/>
    <property type="match status" value="1"/>
</dbReference>
<dbReference type="FunFam" id="3.40.50.920:FF:000002">
    <property type="entry name" value="1-deoxy-D-xylulose-5-phosphate synthase"/>
    <property type="match status" value="1"/>
</dbReference>
<dbReference type="FunFam" id="3.40.50.970:FF:000005">
    <property type="entry name" value="1-deoxy-D-xylulose-5-phosphate synthase"/>
    <property type="match status" value="1"/>
</dbReference>
<dbReference type="Gene3D" id="3.40.50.920">
    <property type="match status" value="1"/>
</dbReference>
<dbReference type="Gene3D" id="3.40.50.970">
    <property type="match status" value="2"/>
</dbReference>
<dbReference type="HAMAP" id="MF_00315">
    <property type="entry name" value="DXP_synth"/>
    <property type="match status" value="1"/>
</dbReference>
<dbReference type="InterPro" id="IPR005477">
    <property type="entry name" value="Dxylulose-5-P_synthase"/>
</dbReference>
<dbReference type="InterPro" id="IPR029061">
    <property type="entry name" value="THDP-binding"/>
</dbReference>
<dbReference type="InterPro" id="IPR009014">
    <property type="entry name" value="Transketo_C/PFOR_II"/>
</dbReference>
<dbReference type="InterPro" id="IPR005475">
    <property type="entry name" value="Transketolase-like_Pyr-bd"/>
</dbReference>
<dbReference type="InterPro" id="IPR020826">
    <property type="entry name" value="Transketolase_BS"/>
</dbReference>
<dbReference type="InterPro" id="IPR033248">
    <property type="entry name" value="Transketolase_C"/>
</dbReference>
<dbReference type="InterPro" id="IPR049557">
    <property type="entry name" value="Transketolase_CS"/>
</dbReference>
<dbReference type="NCBIfam" id="TIGR00204">
    <property type="entry name" value="dxs"/>
    <property type="match status" value="1"/>
</dbReference>
<dbReference type="NCBIfam" id="NF003933">
    <property type="entry name" value="PRK05444.2-2"/>
    <property type="match status" value="1"/>
</dbReference>
<dbReference type="PANTHER" id="PTHR43322">
    <property type="entry name" value="1-D-DEOXYXYLULOSE 5-PHOSPHATE SYNTHASE-RELATED"/>
    <property type="match status" value="1"/>
</dbReference>
<dbReference type="PANTHER" id="PTHR43322:SF5">
    <property type="entry name" value="1-DEOXY-D-XYLULOSE-5-PHOSPHATE SYNTHASE, CHLOROPLASTIC"/>
    <property type="match status" value="1"/>
</dbReference>
<dbReference type="Pfam" id="PF13292">
    <property type="entry name" value="DXP_synthase_N"/>
    <property type="match status" value="1"/>
</dbReference>
<dbReference type="Pfam" id="PF02779">
    <property type="entry name" value="Transket_pyr"/>
    <property type="match status" value="1"/>
</dbReference>
<dbReference type="Pfam" id="PF02780">
    <property type="entry name" value="Transketolase_C"/>
    <property type="match status" value="1"/>
</dbReference>
<dbReference type="SMART" id="SM00861">
    <property type="entry name" value="Transket_pyr"/>
    <property type="match status" value="1"/>
</dbReference>
<dbReference type="SUPFAM" id="SSF52518">
    <property type="entry name" value="Thiamin diphosphate-binding fold (THDP-binding)"/>
    <property type="match status" value="2"/>
</dbReference>
<dbReference type="SUPFAM" id="SSF52922">
    <property type="entry name" value="TK C-terminal domain-like"/>
    <property type="match status" value="1"/>
</dbReference>
<dbReference type="PROSITE" id="PS00801">
    <property type="entry name" value="TRANSKETOLASE_1"/>
    <property type="match status" value="1"/>
</dbReference>
<dbReference type="PROSITE" id="PS00802">
    <property type="entry name" value="TRANSKETOLASE_2"/>
    <property type="match status" value="1"/>
</dbReference>
<organism>
    <name type="scientific">Salmonella enteritidis PT4 (strain P125109)</name>
    <dbReference type="NCBI Taxonomy" id="550537"/>
    <lineage>
        <taxon>Bacteria</taxon>
        <taxon>Pseudomonadati</taxon>
        <taxon>Pseudomonadota</taxon>
        <taxon>Gammaproteobacteria</taxon>
        <taxon>Enterobacterales</taxon>
        <taxon>Enterobacteriaceae</taxon>
        <taxon>Salmonella</taxon>
    </lineage>
</organism>
<keyword id="KW-0414">Isoprene biosynthesis</keyword>
<keyword id="KW-0460">Magnesium</keyword>
<keyword id="KW-0479">Metal-binding</keyword>
<keyword id="KW-0784">Thiamine biosynthesis</keyword>
<keyword id="KW-0786">Thiamine pyrophosphate</keyword>
<keyword id="KW-0808">Transferase</keyword>
<accession>B5QTH0</accession>
<feature type="chain" id="PRO_1000115766" description="1-deoxy-D-xylulose-5-phosphate synthase">
    <location>
        <begin position="1"/>
        <end position="620"/>
    </location>
</feature>
<feature type="binding site" evidence="1">
    <location>
        <position position="80"/>
    </location>
    <ligand>
        <name>thiamine diphosphate</name>
        <dbReference type="ChEBI" id="CHEBI:58937"/>
    </ligand>
</feature>
<feature type="binding site" evidence="1">
    <location>
        <begin position="121"/>
        <end position="123"/>
    </location>
    <ligand>
        <name>thiamine diphosphate</name>
        <dbReference type="ChEBI" id="CHEBI:58937"/>
    </ligand>
</feature>
<feature type="binding site" evidence="1">
    <location>
        <position position="152"/>
    </location>
    <ligand>
        <name>Mg(2+)</name>
        <dbReference type="ChEBI" id="CHEBI:18420"/>
    </ligand>
</feature>
<feature type="binding site" evidence="1">
    <location>
        <begin position="153"/>
        <end position="154"/>
    </location>
    <ligand>
        <name>thiamine diphosphate</name>
        <dbReference type="ChEBI" id="CHEBI:58937"/>
    </ligand>
</feature>
<feature type="binding site" evidence="1">
    <location>
        <position position="181"/>
    </location>
    <ligand>
        <name>Mg(2+)</name>
        <dbReference type="ChEBI" id="CHEBI:18420"/>
    </ligand>
</feature>
<feature type="binding site" evidence="1">
    <location>
        <position position="181"/>
    </location>
    <ligand>
        <name>thiamine diphosphate</name>
        <dbReference type="ChEBI" id="CHEBI:58937"/>
    </ligand>
</feature>
<feature type="binding site" evidence="1">
    <location>
        <position position="288"/>
    </location>
    <ligand>
        <name>thiamine diphosphate</name>
        <dbReference type="ChEBI" id="CHEBI:58937"/>
    </ligand>
</feature>
<feature type="binding site" evidence="1">
    <location>
        <position position="370"/>
    </location>
    <ligand>
        <name>thiamine diphosphate</name>
        <dbReference type="ChEBI" id="CHEBI:58937"/>
    </ligand>
</feature>
<sequence length="620" mass="67468">MSFDIAKYPTLALVDSTQELRLLPKESLPKLCDELRRYLLDSVSRSSGHFASGLGTVELTVALHYVYNTPFDQLIWDVGHQAYPHKILTGRRDKIGTIRQKGGLHPFPWRGESEYDVLSVGHSSTSISAGIGIAVAAEKEGKDRRTVCVIGDGAITAGMAFEAMNHAGDIRPDMLVILNDNEMSISENVGALNNHLAQLLSGKLYSSLREGGKKVFSGVPPIKELLKRTEEHIKGMVVPGTLFEELGFNYIGPVDGHDVMGLISTLKNMRDLKGPQFLHIMTKKGRGYEPAEKDPITFHAVPKFDPSSGCLPKSSGGLPGYSKIFGDWLCETAAKDSKLMAITPAMREGSGMVEFSRKFPDRYFDVAIAEQHAVTFAAGLAIGGYKPVVAIYSTFLQRAYDQVIHDVAIQKLPVMFAIDRAGIVGADGQTHQGAFDLSYLRCIPDMVIMTPSDENECRQMLFTGYHYNDGPTAVRYPRGNAQGVALTPLEKLPIGKGLVKRHGEKLAILNFGTLMPEAAKVAEALNATLVDMRFVKPLDDTLILEMAAQHDALVTLEENAIMGGAGSGVNEVLMAHRKPVPVLNIGLPDFFIPQGTQEEARAELGLDAAGIEAKIKAWLA</sequence>
<proteinExistence type="inferred from homology"/>
<comment type="function">
    <text evidence="1">Catalyzes the acyloin condensation reaction between C atoms 2 and 3 of pyruvate and glyceraldehyde 3-phosphate to yield 1-deoxy-D-xylulose-5-phosphate (DXP).</text>
</comment>
<comment type="catalytic activity">
    <reaction evidence="1">
        <text>D-glyceraldehyde 3-phosphate + pyruvate + H(+) = 1-deoxy-D-xylulose 5-phosphate + CO2</text>
        <dbReference type="Rhea" id="RHEA:12605"/>
        <dbReference type="ChEBI" id="CHEBI:15361"/>
        <dbReference type="ChEBI" id="CHEBI:15378"/>
        <dbReference type="ChEBI" id="CHEBI:16526"/>
        <dbReference type="ChEBI" id="CHEBI:57792"/>
        <dbReference type="ChEBI" id="CHEBI:59776"/>
        <dbReference type="EC" id="2.2.1.7"/>
    </reaction>
</comment>
<comment type="cofactor">
    <cofactor evidence="1">
        <name>Mg(2+)</name>
        <dbReference type="ChEBI" id="CHEBI:18420"/>
    </cofactor>
    <text evidence="1">Binds 1 Mg(2+) ion per subunit.</text>
</comment>
<comment type="cofactor">
    <cofactor evidence="1">
        <name>thiamine diphosphate</name>
        <dbReference type="ChEBI" id="CHEBI:58937"/>
    </cofactor>
    <text evidence="1">Binds 1 thiamine pyrophosphate per subunit.</text>
</comment>
<comment type="pathway">
    <text evidence="1">Metabolic intermediate biosynthesis; 1-deoxy-D-xylulose 5-phosphate biosynthesis; 1-deoxy-D-xylulose 5-phosphate from D-glyceraldehyde 3-phosphate and pyruvate: step 1/1.</text>
</comment>
<comment type="subunit">
    <text evidence="1">Homodimer.</text>
</comment>
<comment type="similarity">
    <text evidence="1">Belongs to the transketolase family. DXPS subfamily.</text>
</comment>
<name>DXS_SALEP</name>
<reference key="1">
    <citation type="journal article" date="2008" name="Genome Res.">
        <title>Comparative genome analysis of Salmonella enteritidis PT4 and Salmonella gallinarum 287/91 provides insights into evolutionary and host adaptation pathways.</title>
        <authorList>
            <person name="Thomson N.R."/>
            <person name="Clayton D.J."/>
            <person name="Windhorst D."/>
            <person name="Vernikos G."/>
            <person name="Davidson S."/>
            <person name="Churcher C."/>
            <person name="Quail M.A."/>
            <person name="Stevens M."/>
            <person name="Jones M.A."/>
            <person name="Watson M."/>
            <person name="Barron A."/>
            <person name="Layton A."/>
            <person name="Pickard D."/>
            <person name="Kingsley R.A."/>
            <person name="Bignell A."/>
            <person name="Clark L."/>
            <person name="Harris B."/>
            <person name="Ormond D."/>
            <person name="Abdellah Z."/>
            <person name="Brooks K."/>
            <person name="Cherevach I."/>
            <person name="Chillingworth T."/>
            <person name="Woodward J."/>
            <person name="Norberczak H."/>
            <person name="Lord A."/>
            <person name="Arrowsmith C."/>
            <person name="Jagels K."/>
            <person name="Moule S."/>
            <person name="Mungall K."/>
            <person name="Saunders M."/>
            <person name="Whitehead S."/>
            <person name="Chabalgoity J.A."/>
            <person name="Maskell D."/>
            <person name="Humphreys T."/>
            <person name="Roberts M."/>
            <person name="Barrow P.A."/>
            <person name="Dougan G."/>
            <person name="Parkhill J."/>
        </authorList>
    </citation>
    <scope>NUCLEOTIDE SEQUENCE [LARGE SCALE GENOMIC DNA]</scope>
    <source>
        <strain>P125109</strain>
    </source>
</reference>
<evidence type="ECO:0000255" key="1">
    <source>
        <dbReference type="HAMAP-Rule" id="MF_00315"/>
    </source>
</evidence>
<protein>
    <recommendedName>
        <fullName evidence="1">1-deoxy-D-xylulose-5-phosphate synthase</fullName>
        <ecNumber evidence="1">2.2.1.7</ecNumber>
    </recommendedName>
    <alternativeName>
        <fullName evidence="1">1-deoxyxylulose-5-phosphate synthase</fullName>
        <shortName evidence="1">DXP synthase</shortName>
        <shortName evidence="1">DXPS</shortName>
    </alternativeName>
</protein>
<gene>
    <name evidence="1" type="primary">dxs</name>
    <name type="ordered locus">SEN0404</name>
</gene>